<gene>
    <name evidence="9" type="primary">XIPI</name>
</gene>
<sequence length="304" mass="33275">MAPLAARRPACLLALLSVAAALFLTPTALAAGGKTGQVTVFWGRNKAEGSLREACDSGMYTMVTMSFLDVFGANGKYHLDLSGHDLSSVGADIKHCQSKGVPVSLSIGGYGTGYSLPSNRSALDLFDHLWNSYFGGSKPSVPRPFGDAWLDGVDLFLEHGTPADRYDVLALELAKHNIRGGPGKPLHLTATVRCGYPPAAHVGRALATGIFERVHVRTYESDKWCNQNLGWEGSWDKWTAAYPATRFYVGLTADDKSHQWVHPKNVYYGVAPVAQKKDNYGGIMLWDRYFDKQTNYSSLIKYYA</sequence>
<organism>
    <name type="scientific">Triticum aestivum</name>
    <name type="common">Wheat</name>
    <dbReference type="NCBI Taxonomy" id="4565"/>
    <lineage>
        <taxon>Eukaryota</taxon>
        <taxon>Viridiplantae</taxon>
        <taxon>Streptophyta</taxon>
        <taxon>Embryophyta</taxon>
        <taxon>Tracheophyta</taxon>
        <taxon>Spermatophyta</taxon>
        <taxon>Magnoliopsida</taxon>
        <taxon>Liliopsida</taxon>
        <taxon>Poales</taxon>
        <taxon>Poaceae</taxon>
        <taxon>BOP clade</taxon>
        <taxon>Pooideae</taxon>
        <taxon>Triticodae</taxon>
        <taxon>Triticeae</taxon>
        <taxon>Triticinae</taxon>
        <taxon>Triticum</taxon>
    </lineage>
</organism>
<dbReference type="EMBL" id="AJ422119">
    <property type="protein sequence ID" value="CAD19479.1"/>
    <property type="molecule type" value="mRNA"/>
</dbReference>
<dbReference type="PDB" id="1OM0">
    <property type="method" value="X-ray"/>
    <property type="resolution" value="1.80 A"/>
    <property type="chains" value="A=31-304"/>
</dbReference>
<dbReference type="PDB" id="1TA3">
    <property type="method" value="X-ray"/>
    <property type="resolution" value="1.70 A"/>
    <property type="chains" value="A=31-304"/>
</dbReference>
<dbReference type="PDB" id="1TE1">
    <property type="method" value="X-ray"/>
    <property type="resolution" value="2.50 A"/>
    <property type="chains" value="A=31-304"/>
</dbReference>
<dbReference type="PDBsum" id="1OM0"/>
<dbReference type="PDBsum" id="1TA3"/>
<dbReference type="PDBsum" id="1TE1"/>
<dbReference type="SMR" id="Q8L5C6"/>
<dbReference type="STRING" id="4565.Q8L5C6"/>
<dbReference type="Allergome" id="9596">
    <property type="allergen name" value="Tri a XI"/>
</dbReference>
<dbReference type="CAZy" id="GH18">
    <property type="family name" value="Glycoside Hydrolase Family 18"/>
</dbReference>
<dbReference type="GlyCosmos" id="Q8L5C6">
    <property type="glycosylation" value="2 sites, No reported glycans"/>
</dbReference>
<dbReference type="iPTMnet" id="Q8L5C6"/>
<dbReference type="PaxDb" id="4565-Traes_4DS_F33F58A71.1"/>
<dbReference type="EnsemblPlants" id="TraesARI4D03G02498250.1">
    <property type="protein sequence ID" value="TraesARI4D03G02498250.1.CDS1"/>
    <property type="gene ID" value="TraesARI4D03G02498250"/>
</dbReference>
<dbReference type="EnsemblPlants" id="TraesARI4D03G02498250.2">
    <property type="protein sequence ID" value="TraesARI4D03G02498250.2.CDS1"/>
    <property type="gene ID" value="TraesARI4D03G02498250"/>
</dbReference>
<dbReference type="EnsemblPlants" id="TraesJAG4D03G02456910.1">
    <property type="protein sequence ID" value="TraesJAG4D03G02456910.1.CDS1"/>
    <property type="gene ID" value="TraesJAG4D03G02456910"/>
</dbReference>
<dbReference type="EnsemblPlants" id="TraesJUL4D03G02478520.1">
    <property type="protein sequence ID" value="TraesJUL4D03G02478520.1.CDS1"/>
    <property type="gene ID" value="TraesJUL4D03G02478520"/>
</dbReference>
<dbReference type="EnsemblPlants" id="TraesJUL4D03G02478520.2">
    <property type="protein sequence ID" value="TraesJUL4D03G02478520.2.CDS1"/>
    <property type="gene ID" value="TraesJUL4D03G02478520"/>
</dbReference>
<dbReference type="EnsemblPlants" id="TraesKAR4D01G0094380.1">
    <property type="protein sequence ID" value="cds.TraesKAR4D01G0094380.1"/>
    <property type="gene ID" value="TraesKAR4D01G0094380"/>
</dbReference>
<dbReference type="EnsemblPlants" id="TraesLAC4D03G02412690.1">
    <property type="protein sequence ID" value="TraesLAC4D03G02412690.1.CDS1"/>
    <property type="gene ID" value="TraesLAC4D03G02412690"/>
</dbReference>
<dbReference type="EnsemblPlants" id="TraesLDM4D03G02461710.1">
    <property type="protein sequence ID" value="TraesLDM4D03G02461710.1.CDS1"/>
    <property type="gene ID" value="TraesLDM4D03G02461710"/>
</dbReference>
<dbReference type="EnsemblPlants" id="TraesMAC4D03G02457650.1">
    <property type="protein sequence ID" value="TraesMAC4D03G02457650.1.CDS1"/>
    <property type="gene ID" value="TraesMAC4D03G02457650"/>
</dbReference>
<dbReference type="EnsemblPlants" id="TraesNOR4D03G02477170.1">
    <property type="protein sequence ID" value="TraesNOR4D03G02477170.1.CDS1"/>
    <property type="gene ID" value="TraesNOR4D03G02477170"/>
</dbReference>
<dbReference type="EnsemblPlants" id="TraesPARA_EIv1.0_1437010.1">
    <property type="protein sequence ID" value="TraesPARA_EIv1.0_1437010.1.CDS1"/>
    <property type="gene ID" value="TraesPARA_EIv1.0_1437010"/>
</dbReference>
<dbReference type="EnsemblPlants" id="TraesSTA4D03G02454780.1">
    <property type="protein sequence ID" value="TraesSTA4D03G02454780.1.CDS1"/>
    <property type="gene ID" value="TraesSTA4D03G02454780"/>
</dbReference>
<dbReference type="EnsemblPlants" id="TraesSYM4D03G02486970.1">
    <property type="protein sequence ID" value="TraesSYM4D03G02486970.1.CDS1"/>
    <property type="gene ID" value="TraesSYM4D03G02486970"/>
</dbReference>
<dbReference type="Gramene" id="TraesARI4D03G02498250.1">
    <property type="protein sequence ID" value="TraesARI4D03G02498250.1.CDS1"/>
    <property type="gene ID" value="TraesARI4D03G02498250"/>
</dbReference>
<dbReference type="Gramene" id="TraesARI4D03G02498250.2">
    <property type="protein sequence ID" value="TraesARI4D03G02498250.2.CDS1"/>
    <property type="gene ID" value="TraesARI4D03G02498250"/>
</dbReference>
<dbReference type="Gramene" id="TraesJAG4D03G02456910.1">
    <property type="protein sequence ID" value="TraesJAG4D03G02456910.1.CDS1"/>
    <property type="gene ID" value="TraesJAG4D03G02456910"/>
</dbReference>
<dbReference type="Gramene" id="TraesJUL4D03G02478520.1">
    <property type="protein sequence ID" value="TraesJUL4D03G02478520.1.CDS1"/>
    <property type="gene ID" value="TraesJUL4D03G02478520"/>
</dbReference>
<dbReference type="Gramene" id="TraesJUL4D03G02478520.2">
    <property type="protein sequence ID" value="TraesJUL4D03G02478520.2.CDS1"/>
    <property type="gene ID" value="TraesJUL4D03G02478520"/>
</dbReference>
<dbReference type="Gramene" id="TraesKAR4D01G0094380.1">
    <property type="protein sequence ID" value="cds.TraesKAR4D01G0094380.1"/>
    <property type="gene ID" value="TraesKAR4D01G0094380"/>
</dbReference>
<dbReference type="Gramene" id="TraesLAC4D03G02412690.1">
    <property type="protein sequence ID" value="TraesLAC4D03G02412690.1.CDS1"/>
    <property type="gene ID" value="TraesLAC4D03G02412690"/>
</dbReference>
<dbReference type="Gramene" id="TraesLDM4D03G02461710.1">
    <property type="protein sequence ID" value="TraesLDM4D03G02461710.1.CDS1"/>
    <property type="gene ID" value="TraesLDM4D03G02461710"/>
</dbReference>
<dbReference type="Gramene" id="TraesMAC4D03G02457650.1">
    <property type="protein sequence ID" value="TraesMAC4D03G02457650.1.CDS1"/>
    <property type="gene ID" value="TraesMAC4D03G02457650"/>
</dbReference>
<dbReference type="Gramene" id="TraesNOR4D03G02477170.1">
    <property type="protein sequence ID" value="TraesNOR4D03G02477170.1.CDS1"/>
    <property type="gene ID" value="TraesNOR4D03G02477170"/>
</dbReference>
<dbReference type="Gramene" id="TraesPARA_EIv1.0_1437010.1">
    <property type="protein sequence ID" value="TraesPARA_EIv1.0_1437010.1.CDS1"/>
    <property type="gene ID" value="TraesPARA_EIv1.0_1437010"/>
</dbReference>
<dbReference type="Gramene" id="TraesSTA4D03G02454780.1">
    <property type="protein sequence ID" value="TraesSTA4D03G02454780.1.CDS1"/>
    <property type="gene ID" value="TraesSTA4D03G02454780"/>
</dbReference>
<dbReference type="Gramene" id="TraesSYM4D03G02486970.1">
    <property type="protein sequence ID" value="TraesSYM4D03G02486970.1.CDS1"/>
    <property type="gene ID" value="TraesSYM4D03G02486970"/>
</dbReference>
<dbReference type="eggNOG" id="KOG4701">
    <property type="taxonomic scope" value="Eukaryota"/>
</dbReference>
<dbReference type="HOGENOM" id="CLU_007818_0_0_1"/>
<dbReference type="EvolutionaryTrace" id="Q8L5C6"/>
<dbReference type="Proteomes" id="UP000019116">
    <property type="component" value="Unplaced"/>
</dbReference>
<dbReference type="ExpressionAtlas" id="Q8L5C6">
    <property type="expression patterns" value="baseline and differential"/>
</dbReference>
<dbReference type="GO" id="GO:0005576">
    <property type="term" value="C:extracellular region"/>
    <property type="evidence" value="ECO:0000318"/>
    <property type="project" value="GO_Central"/>
</dbReference>
<dbReference type="GO" id="GO:0004857">
    <property type="term" value="F:enzyme inhibitor activity"/>
    <property type="evidence" value="ECO:0000314"/>
    <property type="project" value="UniProtKB"/>
</dbReference>
<dbReference type="GO" id="GO:0016798">
    <property type="term" value="F:hydrolase activity, acting on glycosyl bonds"/>
    <property type="evidence" value="ECO:0007669"/>
    <property type="project" value="UniProtKB-KW"/>
</dbReference>
<dbReference type="GO" id="GO:0005975">
    <property type="term" value="P:carbohydrate metabolic process"/>
    <property type="evidence" value="ECO:0007669"/>
    <property type="project" value="InterPro"/>
</dbReference>
<dbReference type="GO" id="GO:0050832">
    <property type="term" value="P:defense response to fungus"/>
    <property type="evidence" value="ECO:0000314"/>
    <property type="project" value="UniProtKB"/>
</dbReference>
<dbReference type="CDD" id="cd02877">
    <property type="entry name" value="GH18_hevamine_XipI_class_III"/>
    <property type="match status" value="1"/>
</dbReference>
<dbReference type="FunFam" id="3.20.20.80:FF:000044">
    <property type="entry name" value="Chitinase III C10701-rice"/>
    <property type="match status" value="1"/>
</dbReference>
<dbReference type="Gene3D" id="3.20.20.80">
    <property type="entry name" value="Glycosidases"/>
    <property type="match status" value="1"/>
</dbReference>
<dbReference type="InterPro" id="IPR045321">
    <property type="entry name" value="Cts1-like"/>
</dbReference>
<dbReference type="InterPro" id="IPR001223">
    <property type="entry name" value="Glyco_hydro18_cat"/>
</dbReference>
<dbReference type="InterPro" id="IPR017853">
    <property type="entry name" value="Glycoside_hydrolase_SF"/>
</dbReference>
<dbReference type="InterPro" id="IPR050542">
    <property type="entry name" value="Glycosyl_Hydrlase18_Chitinase"/>
</dbReference>
<dbReference type="PANTHER" id="PTHR45708">
    <property type="entry name" value="ENDOCHITINASE"/>
    <property type="match status" value="1"/>
</dbReference>
<dbReference type="PANTHER" id="PTHR45708:SF9">
    <property type="entry name" value="XYLANASE INHIBITOR PROTEIN 1"/>
    <property type="match status" value="1"/>
</dbReference>
<dbReference type="Pfam" id="PF00704">
    <property type="entry name" value="Glyco_hydro_18"/>
    <property type="match status" value="1"/>
</dbReference>
<dbReference type="SUPFAM" id="SSF51445">
    <property type="entry name" value="(Trans)glycosidases"/>
    <property type="match status" value="1"/>
</dbReference>
<dbReference type="PROSITE" id="PS51910">
    <property type="entry name" value="GH18_2"/>
    <property type="match status" value="1"/>
</dbReference>
<comment type="function">
    <text evidence="3 4 5 6">Fungal xylanase inhibitor. Possesses competitive inhibiting activity against fungal endo-1,4-beta-D-xylanases belonging to glycoside hydrolase family 10 (GH10) and family 11 (GH11). Possesses also inhibitory activity towards barley alpha-amylases. Binding to xylanases or amylases is necessary for inhibition activity. May function in plant defense against secreted fungal pathogen xylanases. Is similar to class III chitinases, but does not exhibit chitinase activity.</text>
</comment>
<comment type="subunit">
    <text evidence="7">Binds to fungal GH10 and GH11 xylanases. Also forms a ternary complex with barley alpha-amylase 1 (AMY1) and insoluble starch.</text>
</comment>
<comment type="subcellular location">
    <subcellularLocation>
        <location evidence="10">Secreted</location>
    </subcellularLocation>
</comment>
<comment type="developmental stage">
    <text evidence="8">Expressed in immature embryos 3 weeks after pollination, in roots and shoots of 3 day and 5 day old seedlings, and in roots of 10 day old seedlings.</text>
</comment>
<comment type="induction">
    <text evidence="8">By wounding, methyl jasmonate, and by E.graminis infection in leaves.</text>
</comment>
<comment type="similarity">
    <text evidence="10">Belongs to the glycosyl hydrolase 18 family. Xylanase inhibitor subfamily.</text>
</comment>
<protein>
    <recommendedName>
        <fullName evidence="9">Xylanase inhibitor protein 1</fullName>
        <shortName evidence="9">XIP-1</shortName>
        <shortName evidence="9">XIP-I</shortName>
    </recommendedName>
    <alternativeName>
        <fullName evidence="10">Class III chitinase homolog</fullName>
    </alternativeName>
</protein>
<reference key="1">
    <citation type="journal article" date="2002" name="FEBS Lett.">
        <title>Functional identification of the cDNA coding for a wheat endo-1,4-beta-D-xylanase inhibitor.</title>
        <authorList>
            <person name="Elliott G.O."/>
            <person name="Hughes R.K."/>
            <person name="Juge N."/>
            <person name="Kroon P.A."/>
            <person name="Williamson G."/>
        </authorList>
    </citation>
    <scope>NUCLEOTIDE SEQUENCE [MRNA]</scope>
    <scope>PROTEIN SEQUENCE OF 31-80; 180-193; 247-264 AND 265-276</scope>
    <scope>FUNCTION</scope>
    <source>
        <strain>cv. Chinese Spring</strain>
        <tissue>Pericarp</tissue>
        <tissue>Testa</tissue>
    </source>
</reference>
<reference key="2">
    <citation type="journal article" date="1999" name="Biochem. J.">
        <title>A novel class of protein from wheat which inhibits xylanases.</title>
        <authorList>
            <person name="McLauchlan W.R."/>
            <person name="Garcia-Conesa M.T."/>
            <person name="Williamson G."/>
            <person name="Roza M."/>
            <person name="Ravestein P."/>
            <person name="Maat J."/>
        </authorList>
    </citation>
    <scope>PROTEIN SEQUENCE OF 31-45</scope>
    <scope>FUNCTION</scope>
</reference>
<reference key="3">
    <citation type="journal article" date="2002" name="Biochem. J.">
        <title>Interactions defining the specificity between fungal xylanases and the xylanase-inhibiting protein XIP-I from wheat.</title>
        <authorList>
            <person name="Flatman R."/>
            <person name="McLauchlan W.R."/>
            <person name="Juge N."/>
            <person name="Furniss C."/>
            <person name="Berrin J.-G."/>
            <person name="Hughes R.K."/>
            <person name="Manzanares P."/>
            <person name="Ladbury J.E."/>
            <person name="O'Brien R."/>
            <person name="Williamson G."/>
        </authorList>
    </citation>
    <scope>FUNCTION</scope>
    <scope>INTERACTION WITH FUNGAL XYLANASES</scope>
</reference>
<reference key="4">
    <citation type="journal article" date="2003" name="Biochim. Biophys. Acta">
        <title>Cross-inhibitory activity of cereal protein inhibitors against alpha-amylases and xylanases.</title>
        <authorList>
            <person name="Sancho A.I."/>
            <person name="Faulds C.B."/>
            <person name="Svensson B."/>
            <person name="Bartolome B."/>
            <person name="Williamson G."/>
            <person name="Juge N."/>
        </authorList>
    </citation>
    <scope>FUNCTION</scope>
    <scope>INTERACTION WITH AMY1</scope>
</reference>
<reference key="5">
    <citation type="journal article" date="2005" name="Biosci. Biotechnol. Biochem.">
        <title>A wheat xylanase inhibitor gene, Xip-I, but not Taxi-I, is significantly induced by biotic and abiotic signals that trigger plant defense.</title>
        <authorList>
            <person name="Igawa T."/>
            <person name="Tokai T."/>
            <person name="Kudo T."/>
            <person name="Yamaguchi I."/>
            <person name="Kimura M."/>
        </authorList>
    </citation>
    <scope>DEVELOPMENTAL STAGE</scope>
    <scope>INDUCTION</scope>
</reference>
<reference key="6">
    <citation type="journal article" date="2003" name="Biochem. J.">
        <title>Structural analysis of xylanase inhibitor protein I (XIP-I), a proteinaceous xylanase inhibitor from wheat (Triticum aestivum, var. Soisson).</title>
        <authorList>
            <person name="Payan F."/>
            <person name="Flatman R."/>
            <person name="Porciero S."/>
            <person name="Williamson G."/>
            <person name="Juge N."/>
            <person name="Roussel A."/>
        </authorList>
    </citation>
    <scope>X-RAY CRYSTALLOGRAPHY (1.80 ANGSTROMS) OF 31-304</scope>
</reference>
<reference key="7">
    <citation type="journal article" date="2004" name="J. Biol. Chem.">
        <title>The dual nature of the wheat xylanase protein inhibitor XIP-I: structural basis for the inhibition of family 10 and family 11 xylanases.</title>
        <authorList>
            <person name="Payan F."/>
            <person name="Leone P."/>
            <person name="Porciero S."/>
            <person name="Furniss C."/>
            <person name="Tahir T."/>
            <person name="Williamson G."/>
            <person name="Durand A."/>
            <person name="Manzanares P."/>
            <person name="Gilbert H.J."/>
            <person name="Juge N."/>
            <person name="Roussel A."/>
        </authorList>
    </citation>
    <scope>X-RAY CRYSTALLOGRAPHY (1.70 ANGSTROMS) OF 31-304 IN COMPLEX WITH FUNGAL XYLANASES</scope>
    <scope>GLYCOSYLATION AT ASN-119 AND ASN-295</scope>
    <scope>DISULFIDE BONDS</scope>
</reference>
<evidence type="ECO:0000255" key="1">
    <source>
        <dbReference type="PROSITE-ProRule" id="PRU00498"/>
    </source>
</evidence>
<evidence type="ECO:0000255" key="2">
    <source>
        <dbReference type="PROSITE-ProRule" id="PRU01258"/>
    </source>
</evidence>
<evidence type="ECO:0000269" key="3">
    <source>
    </source>
</evidence>
<evidence type="ECO:0000269" key="4">
    <source>
    </source>
</evidence>
<evidence type="ECO:0000269" key="5">
    <source>
    </source>
</evidence>
<evidence type="ECO:0000269" key="6">
    <source>
    </source>
</evidence>
<evidence type="ECO:0000269" key="7">
    <source>
    </source>
</evidence>
<evidence type="ECO:0000269" key="8">
    <source>
    </source>
</evidence>
<evidence type="ECO:0000303" key="9">
    <source>
    </source>
</evidence>
<evidence type="ECO:0000305" key="10"/>
<evidence type="ECO:0007744" key="11">
    <source>
        <dbReference type="PDB" id="1TE1"/>
    </source>
</evidence>
<evidence type="ECO:0007829" key="12">
    <source>
        <dbReference type="PDB" id="1OM0"/>
    </source>
</evidence>
<evidence type="ECO:0007829" key="13">
    <source>
        <dbReference type="PDB" id="1TA3"/>
    </source>
</evidence>
<accession>Q8L5C6</accession>
<name>XIP1_WHEAT</name>
<feature type="signal peptide" evidence="3 5">
    <location>
        <begin position="1"/>
        <end position="30"/>
    </location>
</feature>
<feature type="chain" id="PRO_0000011990" description="Xylanase inhibitor protein 1">
    <location>
        <begin position="31"/>
        <end position="304"/>
    </location>
</feature>
<feature type="domain" description="GH18" evidence="2">
    <location>
        <begin position="36"/>
        <end position="304"/>
    </location>
</feature>
<feature type="region of interest" description="Interaction with fungal GH11 xylanase" evidence="7">
    <location>
        <begin position="178"/>
        <end position="184"/>
    </location>
</feature>
<feature type="region of interest" description="Interaction with fungal GH10 xylanase" evidence="7">
    <location>
        <begin position="262"/>
        <end position="275"/>
    </location>
</feature>
<feature type="active site" description="Proton donor" evidence="2">
    <location>
        <position position="158"/>
    </location>
</feature>
<feature type="glycosylation site" description="N-linked (GlcNAc...) asparagine" evidence="1 7 11">
    <location>
        <position position="119"/>
    </location>
</feature>
<feature type="glycosylation site" description="N-linked (GlcNAc...) asparagine" evidence="1 7 11">
    <location>
        <position position="295"/>
    </location>
</feature>
<feature type="disulfide bond" evidence="7 11">
    <location>
        <begin position="55"/>
        <end position="96"/>
    </location>
</feature>
<feature type="disulfide bond" evidence="7 11">
    <location>
        <begin position="194"/>
        <end position="225"/>
    </location>
</feature>
<feature type="sequence conflict" description="In Ref. 1; CAD19479." evidence="10" ref="1">
    <original>F</original>
    <variation>L</variation>
    <location>
        <position position="67"/>
    </location>
</feature>
<feature type="sequence conflict" description="In Ref. 1; CAD19479." evidence="10" ref="1">
    <original>V</original>
    <variation>A</variation>
    <location>
        <position position="214"/>
    </location>
</feature>
<feature type="strand" evidence="13">
    <location>
        <begin position="38"/>
        <end position="44"/>
    </location>
</feature>
<feature type="helix" evidence="13">
    <location>
        <begin position="46"/>
        <end position="48"/>
    </location>
</feature>
<feature type="helix" evidence="13">
    <location>
        <begin position="51"/>
        <end position="56"/>
    </location>
</feature>
<feature type="strand" evidence="13">
    <location>
        <begin position="61"/>
        <end position="75"/>
    </location>
</feature>
<feature type="helix" evidence="13">
    <location>
        <begin position="86"/>
        <end position="88"/>
    </location>
</feature>
<feature type="helix" evidence="13">
    <location>
        <begin position="89"/>
        <end position="98"/>
    </location>
</feature>
<feature type="strand" evidence="13">
    <location>
        <begin position="103"/>
        <end position="112"/>
    </location>
</feature>
<feature type="helix" evidence="13">
    <location>
        <begin position="119"/>
        <end position="133"/>
    </location>
</feature>
<feature type="turn" evidence="13">
    <location>
        <begin position="144"/>
        <end position="147"/>
    </location>
</feature>
<feature type="strand" evidence="13">
    <location>
        <begin position="151"/>
        <end position="159"/>
    </location>
</feature>
<feature type="helix" evidence="13">
    <location>
        <begin position="166"/>
        <end position="174"/>
    </location>
</feature>
<feature type="strand" evidence="13">
    <location>
        <begin position="179"/>
        <end position="183"/>
    </location>
</feature>
<feature type="strand" evidence="13">
    <location>
        <begin position="187"/>
        <end position="192"/>
    </location>
</feature>
<feature type="strand" evidence="13">
    <location>
        <begin position="194"/>
        <end position="197"/>
    </location>
</feature>
<feature type="helix" evidence="13">
    <location>
        <begin position="200"/>
        <end position="206"/>
    </location>
</feature>
<feature type="strand" evidence="13">
    <location>
        <begin position="213"/>
        <end position="217"/>
    </location>
</feature>
<feature type="turn" evidence="12">
    <location>
        <begin position="227"/>
        <end position="229"/>
    </location>
</feature>
<feature type="helix" evidence="13">
    <location>
        <begin position="231"/>
        <end position="241"/>
    </location>
</feature>
<feature type="strand" evidence="13">
    <location>
        <begin position="245"/>
        <end position="252"/>
    </location>
</feature>
<feature type="helix" evidence="13">
    <location>
        <begin position="263"/>
        <end position="268"/>
    </location>
</feature>
<feature type="helix" evidence="13">
    <location>
        <begin position="270"/>
        <end position="274"/>
    </location>
</feature>
<feature type="strand" evidence="13">
    <location>
        <begin position="280"/>
        <end position="286"/>
    </location>
</feature>
<feature type="helix" evidence="13">
    <location>
        <begin position="288"/>
        <end position="294"/>
    </location>
</feature>
<feature type="helix" evidence="13">
    <location>
        <begin position="296"/>
        <end position="300"/>
    </location>
</feature>
<feature type="turn" evidence="13">
    <location>
        <begin position="301"/>
        <end position="303"/>
    </location>
</feature>
<keyword id="KW-0002">3D-structure</keyword>
<keyword id="KW-0903">Direct protein sequencing</keyword>
<keyword id="KW-1015">Disulfide bond</keyword>
<keyword id="KW-0325">Glycoprotein</keyword>
<keyword id="KW-0326">Glycosidase</keyword>
<keyword id="KW-0378">Hydrolase</keyword>
<keyword id="KW-0611">Plant defense</keyword>
<keyword id="KW-1185">Reference proteome</keyword>
<keyword id="KW-0964">Secreted</keyword>
<keyword id="KW-0732">Signal</keyword>
<proteinExistence type="evidence at protein level"/>